<dbReference type="EC" id="2.1.1.182" evidence="1"/>
<dbReference type="EMBL" id="CP001154">
    <property type="protein sequence ID" value="ACO73021.1"/>
    <property type="molecule type" value="Genomic_DNA"/>
</dbReference>
<dbReference type="RefSeq" id="WP_012695516.1">
    <property type="nucleotide sequence ID" value="NC_012559.1"/>
</dbReference>
<dbReference type="SMR" id="C1D9C2"/>
<dbReference type="STRING" id="557598.LHK_00025"/>
<dbReference type="GeneID" id="75109679"/>
<dbReference type="KEGG" id="lhk:LHK_00025"/>
<dbReference type="eggNOG" id="COG0030">
    <property type="taxonomic scope" value="Bacteria"/>
</dbReference>
<dbReference type="HOGENOM" id="CLU_041220_0_1_4"/>
<dbReference type="Proteomes" id="UP000002010">
    <property type="component" value="Chromosome"/>
</dbReference>
<dbReference type="GO" id="GO:0005829">
    <property type="term" value="C:cytosol"/>
    <property type="evidence" value="ECO:0007669"/>
    <property type="project" value="TreeGrafter"/>
</dbReference>
<dbReference type="GO" id="GO:0052908">
    <property type="term" value="F:16S rRNA (adenine(1518)-N(6)/adenine(1519)-N(6))-dimethyltransferase activity"/>
    <property type="evidence" value="ECO:0007669"/>
    <property type="project" value="UniProtKB-EC"/>
</dbReference>
<dbReference type="GO" id="GO:0003723">
    <property type="term" value="F:RNA binding"/>
    <property type="evidence" value="ECO:0007669"/>
    <property type="project" value="UniProtKB-KW"/>
</dbReference>
<dbReference type="FunFam" id="1.10.8.100:FF:000001">
    <property type="entry name" value="Ribosomal RNA small subunit methyltransferase A"/>
    <property type="match status" value="1"/>
</dbReference>
<dbReference type="Gene3D" id="1.10.8.100">
    <property type="entry name" value="Ribosomal RNA adenine dimethylase-like, domain 2"/>
    <property type="match status" value="1"/>
</dbReference>
<dbReference type="Gene3D" id="3.40.50.150">
    <property type="entry name" value="Vaccinia Virus protein VP39"/>
    <property type="match status" value="1"/>
</dbReference>
<dbReference type="HAMAP" id="MF_00607">
    <property type="entry name" value="16SrRNA_methyltr_A"/>
    <property type="match status" value="1"/>
</dbReference>
<dbReference type="InterPro" id="IPR001737">
    <property type="entry name" value="KsgA/Erm"/>
</dbReference>
<dbReference type="InterPro" id="IPR023165">
    <property type="entry name" value="rRNA_Ade_diMease-like_C"/>
</dbReference>
<dbReference type="InterPro" id="IPR020596">
    <property type="entry name" value="rRNA_Ade_Mease_Trfase_CS"/>
</dbReference>
<dbReference type="InterPro" id="IPR020598">
    <property type="entry name" value="rRNA_Ade_methylase_Trfase_N"/>
</dbReference>
<dbReference type="InterPro" id="IPR011530">
    <property type="entry name" value="rRNA_adenine_dimethylase"/>
</dbReference>
<dbReference type="InterPro" id="IPR029063">
    <property type="entry name" value="SAM-dependent_MTases_sf"/>
</dbReference>
<dbReference type="NCBIfam" id="TIGR00755">
    <property type="entry name" value="ksgA"/>
    <property type="match status" value="1"/>
</dbReference>
<dbReference type="PANTHER" id="PTHR11727">
    <property type="entry name" value="DIMETHYLADENOSINE TRANSFERASE"/>
    <property type="match status" value="1"/>
</dbReference>
<dbReference type="PANTHER" id="PTHR11727:SF7">
    <property type="entry name" value="DIMETHYLADENOSINE TRANSFERASE-RELATED"/>
    <property type="match status" value="1"/>
</dbReference>
<dbReference type="Pfam" id="PF00398">
    <property type="entry name" value="RrnaAD"/>
    <property type="match status" value="1"/>
</dbReference>
<dbReference type="SMART" id="SM00650">
    <property type="entry name" value="rADc"/>
    <property type="match status" value="1"/>
</dbReference>
<dbReference type="SUPFAM" id="SSF53335">
    <property type="entry name" value="S-adenosyl-L-methionine-dependent methyltransferases"/>
    <property type="match status" value="1"/>
</dbReference>
<dbReference type="PROSITE" id="PS01131">
    <property type="entry name" value="RRNA_A_DIMETH"/>
    <property type="match status" value="1"/>
</dbReference>
<dbReference type="PROSITE" id="PS51689">
    <property type="entry name" value="SAM_RNA_A_N6_MT"/>
    <property type="match status" value="1"/>
</dbReference>
<sequence length="262" mass="29501">MSRHIPKKRFGQNFLQDAFIIHSIVAAVDARPGDVVVEIGPGLGALTRPLLRALPQLHVVEIDRDIIARLAAEFPPERLVIHEGDALAFDFGALAHEQPLKLVGNLPYNISTPLLFHLATYADRVTDMHFMLQKEVVDRMVADPGCADYGRLTVMLQYRFAMERLIDVPPESFDPPPKVDSAVVRMIPHAELPWPADDEENLSALVAQAFAQRRKTLRNNLRGWLDDDDFAALGIDPQRRPETLTLREFVLLSNRHGEKGRQ</sequence>
<protein>
    <recommendedName>
        <fullName evidence="1">Ribosomal RNA small subunit methyltransferase A</fullName>
        <ecNumber evidence="1">2.1.1.182</ecNumber>
    </recommendedName>
    <alternativeName>
        <fullName evidence="1">16S rRNA (adenine(1518)-N(6)/adenine(1519)-N(6))-dimethyltransferase</fullName>
    </alternativeName>
    <alternativeName>
        <fullName evidence="1">16S rRNA dimethyladenosine transferase</fullName>
    </alternativeName>
    <alternativeName>
        <fullName evidence="1">16S rRNA dimethylase</fullName>
    </alternativeName>
    <alternativeName>
        <fullName evidence="1">S-adenosylmethionine-6-N', N'-adenosyl(rRNA) dimethyltransferase</fullName>
    </alternativeName>
</protein>
<comment type="function">
    <text evidence="1">Specifically dimethylates two adjacent adenosines (A1518 and A1519) in the loop of a conserved hairpin near the 3'-end of 16S rRNA in the 30S particle. May play a critical role in biogenesis of 30S subunits.</text>
</comment>
<comment type="catalytic activity">
    <reaction evidence="1">
        <text>adenosine(1518)/adenosine(1519) in 16S rRNA + 4 S-adenosyl-L-methionine = N(6)-dimethyladenosine(1518)/N(6)-dimethyladenosine(1519) in 16S rRNA + 4 S-adenosyl-L-homocysteine + 4 H(+)</text>
        <dbReference type="Rhea" id="RHEA:19609"/>
        <dbReference type="Rhea" id="RHEA-COMP:10232"/>
        <dbReference type="Rhea" id="RHEA-COMP:10233"/>
        <dbReference type="ChEBI" id="CHEBI:15378"/>
        <dbReference type="ChEBI" id="CHEBI:57856"/>
        <dbReference type="ChEBI" id="CHEBI:59789"/>
        <dbReference type="ChEBI" id="CHEBI:74411"/>
        <dbReference type="ChEBI" id="CHEBI:74493"/>
        <dbReference type="EC" id="2.1.1.182"/>
    </reaction>
</comment>
<comment type="subcellular location">
    <subcellularLocation>
        <location evidence="1">Cytoplasm</location>
    </subcellularLocation>
</comment>
<comment type="similarity">
    <text evidence="1">Belongs to the class I-like SAM-binding methyltransferase superfamily. rRNA adenine N(6)-methyltransferase family. RsmA subfamily.</text>
</comment>
<gene>
    <name evidence="1" type="primary">rsmA</name>
    <name evidence="1" type="synonym">ksgA</name>
    <name type="ordered locus">LHK_00025</name>
</gene>
<reference key="1">
    <citation type="journal article" date="2009" name="PLoS Genet.">
        <title>The complete genome and proteome of Laribacter hongkongensis reveal potential mechanisms for adaptations to different temperatures and habitats.</title>
        <authorList>
            <person name="Woo P.C.Y."/>
            <person name="Lau S.K.P."/>
            <person name="Tse H."/>
            <person name="Teng J.L.L."/>
            <person name="Curreem S.O."/>
            <person name="Tsang A.K.L."/>
            <person name="Fan R.Y.Y."/>
            <person name="Wong G.K.M."/>
            <person name="Huang Y."/>
            <person name="Loman N.J."/>
            <person name="Snyder L.A.S."/>
            <person name="Cai J.J."/>
            <person name="Huang J.-D."/>
            <person name="Mak W."/>
            <person name="Pallen M.J."/>
            <person name="Lok S."/>
            <person name="Yuen K.-Y."/>
        </authorList>
    </citation>
    <scope>NUCLEOTIDE SEQUENCE [LARGE SCALE GENOMIC DNA]</scope>
    <source>
        <strain>HLHK9</strain>
    </source>
</reference>
<proteinExistence type="inferred from homology"/>
<keyword id="KW-0963">Cytoplasm</keyword>
<keyword id="KW-0489">Methyltransferase</keyword>
<keyword id="KW-1185">Reference proteome</keyword>
<keyword id="KW-0694">RNA-binding</keyword>
<keyword id="KW-0698">rRNA processing</keyword>
<keyword id="KW-0949">S-adenosyl-L-methionine</keyword>
<keyword id="KW-0808">Transferase</keyword>
<feature type="chain" id="PRO_1000194386" description="Ribosomal RNA small subunit methyltransferase A">
    <location>
        <begin position="1"/>
        <end position="262"/>
    </location>
</feature>
<feature type="binding site" evidence="1">
    <location>
        <position position="13"/>
    </location>
    <ligand>
        <name>S-adenosyl-L-methionine</name>
        <dbReference type="ChEBI" id="CHEBI:59789"/>
    </ligand>
</feature>
<feature type="binding site" evidence="1">
    <location>
        <position position="15"/>
    </location>
    <ligand>
        <name>S-adenosyl-L-methionine</name>
        <dbReference type="ChEBI" id="CHEBI:59789"/>
    </ligand>
</feature>
<feature type="binding site" evidence="1">
    <location>
        <position position="40"/>
    </location>
    <ligand>
        <name>S-adenosyl-L-methionine</name>
        <dbReference type="ChEBI" id="CHEBI:59789"/>
    </ligand>
</feature>
<feature type="binding site" evidence="1">
    <location>
        <position position="61"/>
    </location>
    <ligand>
        <name>S-adenosyl-L-methionine</name>
        <dbReference type="ChEBI" id="CHEBI:59789"/>
    </ligand>
</feature>
<feature type="binding site" evidence="1">
    <location>
        <position position="85"/>
    </location>
    <ligand>
        <name>S-adenosyl-L-methionine</name>
        <dbReference type="ChEBI" id="CHEBI:59789"/>
    </ligand>
</feature>
<feature type="binding site" evidence="1">
    <location>
        <position position="105"/>
    </location>
    <ligand>
        <name>S-adenosyl-L-methionine</name>
        <dbReference type="ChEBI" id="CHEBI:59789"/>
    </ligand>
</feature>
<name>RSMA_LARHH</name>
<organism>
    <name type="scientific">Laribacter hongkongensis (strain HLHK9)</name>
    <dbReference type="NCBI Taxonomy" id="557598"/>
    <lineage>
        <taxon>Bacteria</taxon>
        <taxon>Pseudomonadati</taxon>
        <taxon>Pseudomonadota</taxon>
        <taxon>Betaproteobacteria</taxon>
        <taxon>Neisseriales</taxon>
        <taxon>Aquaspirillaceae</taxon>
        <taxon>Laribacter</taxon>
    </lineage>
</organism>
<evidence type="ECO:0000255" key="1">
    <source>
        <dbReference type="HAMAP-Rule" id="MF_00607"/>
    </source>
</evidence>
<accession>C1D9C2</accession>